<proteinExistence type="inferred from homology"/>
<protein>
    <recommendedName>
        <fullName>Carbamoyl phosphate synthase arginine-specific small chain</fullName>
        <shortName>CPS</shortName>
        <shortName>CPSase</shortName>
        <ecNumber evidence="1">6.3.5.5</ecNumber>
    </recommendedName>
    <alternativeName>
        <fullName>Arginine-specific carbamoyl phosphate synthetase, glutamine chain</fullName>
    </alternativeName>
    <alternativeName>
        <fullName>Glutamine-dependent carbamoyl phosphate synthetase</fullName>
    </alternativeName>
</protein>
<dbReference type="EC" id="6.3.5.5" evidence="1"/>
<dbReference type="EMBL" id="AAHF01000003">
    <property type="protein sequence ID" value="EAL91917.1"/>
    <property type="molecule type" value="Genomic_DNA"/>
</dbReference>
<dbReference type="RefSeq" id="XP_753955.1">
    <property type="nucleotide sequence ID" value="XM_748862.1"/>
</dbReference>
<dbReference type="SMR" id="Q4WU09"/>
<dbReference type="FunCoup" id="Q4WU09">
    <property type="interactions" value="355"/>
</dbReference>
<dbReference type="STRING" id="330879.Q4WU09"/>
<dbReference type="MEROPS" id="C26.952"/>
<dbReference type="EnsemblFungi" id="EAL91917">
    <property type="protein sequence ID" value="EAL91917"/>
    <property type="gene ID" value="AFUA_5G06780"/>
</dbReference>
<dbReference type="GeneID" id="3510728"/>
<dbReference type="KEGG" id="afm:AFUA_5G06780"/>
<dbReference type="VEuPathDB" id="FungiDB:Afu5g06780"/>
<dbReference type="eggNOG" id="KOG0370">
    <property type="taxonomic scope" value="Eukaryota"/>
</dbReference>
<dbReference type="HOGENOM" id="CLU_035901_1_0_1"/>
<dbReference type="InParanoid" id="Q4WU09"/>
<dbReference type="OMA" id="CFSVQYH"/>
<dbReference type="OrthoDB" id="434at2759"/>
<dbReference type="UniPathway" id="UPA00068">
    <property type="reaction ID" value="UER00171"/>
</dbReference>
<dbReference type="Proteomes" id="UP000002530">
    <property type="component" value="Chromosome 5"/>
</dbReference>
<dbReference type="GO" id="GO:0005951">
    <property type="term" value="C:carbamoyl-phosphate synthase complex"/>
    <property type="evidence" value="ECO:0000318"/>
    <property type="project" value="GO_Central"/>
</dbReference>
<dbReference type="GO" id="GO:0005737">
    <property type="term" value="C:cytoplasm"/>
    <property type="evidence" value="ECO:0000318"/>
    <property type="project" value="GO_Central"/>
</dbReference>
<dbReference type="GO" id="GO:0005759">
    <property type="term" value="C:mitochondrial matrix"/>
    <property type="evidence" value="ECO:0007669"/>
    <property type="project" value="UniProtKB-SubCell"/>
</dbReference>
<dbReference type="GO" id="GO:0005524">
    <property type="term" value="F:ATP binding"/>
    <property type="evidence" value="ECO:0007669"/>
    <property type="project" value="UniProtKB-KW"/>
</dbReference>
<dbReference type="GO" id="GO:0004088">
    <property type="term" value="F:carbamoyl-phosphate synthase (glutamine-hydrolyzing) activity"/>
    <property type="evidence" value="ECO:0007669"/>
    <property type="project" value="UniProtKB-EC"/>
</dbReference>
<dbReference type="GO" id="GO:0004359">
    <property type="term" value="F:glutaminase activity"/>
    <property type="evidence" value="ECO:0007669"/>
    <property type="project" value="RHEA"/>
</dbReference>
<dbReference type="GO" id="GO:0006207">
    <property type="term" value="P:'de novo' pyrimidine nucleobase biosynthetic process"/>
    <property type="evidence" value="ECO:0007669"/>
    <property type="project" value="InterPro"/>
</dbReference>
<dbReference type="GO" id="GO:0006541">
    <property type="term" value="P:glutamine metabolic process"/>
    <property type="evidence" value="ECO:0007669"/>
    <property type="project" value="InterPro"/>
</dbReference>
<dbReference type="GO" id="GO:0006526">
    <property type="term" value="P:L-arginine biosynthetic process"/>
    <property type="evidence" value="ECO:0000318"/>
    <property type="project" value="GO_Central"/>
</dbReference>
<dbReference type="GO" id="GO:0006221">
    <property type="term" value="P:pyrimidine nucleotide biosynthetic process"/>
    <property type="evidence" value="ECO:0007669"/>
    <property type="project" value="EnsemblFungi"/>
</dbReference>
<dbReference type="CDD" id="cd01744">
    <property type="entry name" value="GATase1_CPSase"/>
    <property type="match status" value="1"/>
</dbReference>
<dbReference type="FunFam" id="3.40.50.880:FF:000016">
    <property type="entry name" value="Carbamoyl-phosphate synthase arginine-specific small chain"/>
    <property type="match status" value="1"/>
</dbReference>
<dbReference type="FunFam" id="3.50.30.20:FF:000003">
    <property type="entry name" value="Carbamoyl-phosphate synthase arginine-specific small chain"/>
    <property type="match status" value="1"/>
</dbReference>
<dbReference type="Gene3D" id="3.40.50.880">
    <property type="match status" value="1"/>
</dbReference>
<dbReference type="Gene3D" id="3.50.30.20">
    <property type="entry name" value="Carbamoyl-phosphate synthase small subunit, N-terminal domain"/>
    <property type="match status" value="1"/>
</dbReference>
<dbReference type="HAMAP" id="MF_01209">
    <property type="entry name" value="CPSase_S_chain"/>
    <property type="match status" value="1"/>
</dbReference>
<dbReference type="InterPro" id="IPR006274">
    <property type="entry name" value="CarbamoylP_synth_ssu"/>
</dbReference>
<dbReference type="InterPro" id="IPR002474">
    <property type="entry name" value="CarbamoylP_synth_ssu_N"/>
</dbReference>
<dbReference type="InterPro" id="IPR036480">
    <property type="entry name" value="CarbP_synth_ssu_N_sf"/>
</dbReference>
<dbReference type="InterPro" id="IPR029062">
    <property type="entry name" value="Class_I_gatase-like"/>
</dbReference>
<dbReference type="InterPro" id="IPR035686">
    <property type="entry name" value="CPSase_GATase1"/>
</dbReference>
<dbReference type="InterPro" id="IPR017926">
    <property type="entry name" value="GATASE"/>
</dbReference>
<dbReference type="NCBIfam" id="TIGR01368">
    <property type="entry name" value="CPSaseIIsmall"/>
    <property type="match status" value="1"/>
</dbReference>
<dbReference type="NCBIfam" id="NF009475">
    <property type="entry name" value="PRK12838.1"/>
    <property type="match status" value="1"/>
</dbReference>
<dbReference type="PANTHER" id="PTHR11405:SF4">
    <property type="entry name" value="CARBAMOYL-PHOSPHATE SYNTHASE ARGININE-SPECIFIC SMALL CHAIN"/>
    <property type="match status" value="1"/>
</dbReference>
<dbReference type="PANTHER" id="PTHR11405">
    <property type="entry name" value="CARBAMOYLTRANSFERASE FAMILY MEMBER"/>
    <property type="match status" value="1"/>
</dbReference>
<dbReference type="Pfam" id="PF00988">
    <property type="entry name" value="CPSase_sm_chain"/>
    <property type="match status" value="1"/>
</dbReference>
<dbReference type="Pfam" id="PF00117">
    <property type="entry name" value="GATase"/>
    <property type="match status" value="1"/>
</dbReference>
<dbReference type="PRINTS" id="PR00097">
    <property type="entry name" value="ANTSNTHASEII"/>
</dbReference>
<dbReference type="PRINTS" id="PR00099">
    <property type="entry name" value="CPSGATASE"/>
</dbReference>
<dbReference type="PRINTS" id="PR00096">
    <property type="entry name" value="GATASE"/>
</dbReference>
<dbReference type="SMART" id="SM01097">
    <property type="entry name" value="CPSase_sm_chain"/>
    <property type="match status" value="1"/>
</dbReference>
<dbReference type="SUPFAM" id="SSF52021">
    <property type="entry name" value="Carbamoyl phosphate synthetase, small subunit N-terminal domain"/>
    <property type="match status" value="1"/>
</dbReference>
<dbReference type="SUPFAM" id="SSF52317">
    <property type="entry name" value="Class I glutamine amidotransferase-like"/>
    <property type="match status" value="1"/>
</dbReference>
<dbReference type="PROSITE" id="PS51273">
    <property type="entry name" value="GATASE_TYPE_1"/>
    <property type="match status" value="1"/>
</dbReference>
<keyword id="KW-0028">Amino-acid biosynthesis</keyword>
<keyword id="KW-0055">Arginine biosynthesis</keyword>
<keyword id="KW-0067">ATP-binding</keyword>
<keyword id="KW-0315">Glutamine amidotransferase</keyword>
<keyword id="KW-0436">Ligase</keyword>
<keyword id="KW-0496">Mitochondrion</keyword>
<keyword id="KW-0547">Nucleotide-binding</keyword>
<keyword id="KW-1185">Reference proteome</keyword>
<keyword id="KW-0809">Transit peptide</keyword>
<evidence type="ECO:0000250" key="1">
    <source>
        <dbReference type="UniProtKB" id="P22572"/>
    </source>
</evidence>
<evidence type="ECO:0000255" key="2"/>
<evidence type="ECO:0000255" key="3">
    <source>
        <dbReference type="PROSITE-ProRule" id="PRU00605"/>
    </source>
</evidence>
<evidence type="ECO:0000305" key="4"/>
<comment type="function">
    <text evidence="1">Small subunit of the arginine-specific carbamoyl phosphate synthase (CPSase). CPSase catalyzes the formation of carbamoyl phosphate from the ammonia moiety of glutamine, carbonate, and phosphate donated by ATP, the first step of the arginine biosynthetic pathway. The small subunit (glutamine amidotransferase) binds and cleaves glutamine to supply the large subunit with the substrate ammonia.</text>
</comment>
<comment type="catalytic activity">
    <reaction evidence="1">
        <text>hydrogencarbonate + L-glutamine + 2 ATP + H2O = carbamoyl phosphate + L-glutamate + 2 ADP + phosphate + 2 H(+)</text>
        <dbReference type="Rhea" id="RHEA:18633"/>
        <dbReference type="ChEBI" id="CHEBI:15377"/>
        <dbReference type="ChEBI" id="CHEBI:15378"/>
        <dbReference type="ChEBI" id="CHEBI:17544"/>
        <dbReference type="ChEBI" id="CHEBI:29985"/>
        <dbReference type="ChEBI" id="CHEBI:30616"/>
        <dbReference type="ChEBI" id="CHEBI:43474"/>
        <dbReference type="ChEBI" id="CHEBI:58228"/>
        <dbReference type="ChEBI" id="CHEBI:58359"/>
        <dbReference type="ChEBI" id="CHEBI:456216"/>
        <dbReference type="EC" id="6.3.5.5"/>
    </reaction>
</comment>
<comment type="catalytic activity">
    <molecule>Carbamoyl phosphate synthase arginine-specific small chain</molecule>
    <reaction evidence="1">
        <text>L-glutamine + H2O = L-glutamate + NH4(+)</text>
        <dbReference type="Rhea" id="RHEA:15889"/>
        <dbReference type="ChEBI" id="CHEBI:15377"/>
        <dbReference type="ChEBI" id="CHEBI:28938"/>
        <dbReference type="ChEBI" id="CHEBI:29985"/>
        <dbReference type="ChEBI" id="CHEBI:58359"/>
    </reaction>
</comment>
<comment type="pathway">
    <text evidence="1">Amino-acid biosynthesis; L-arginine biosynthesis; carbamoyl phosphate from bicarbonate: step 1/1.</text>
</comment>
<comment type="subunit">
    <text evidence="1">Heterodimer composed of 2 chains; the small (or glutamine) chain promotes the hydrolysis of glutamine to ammonia, which is used by the large (or ammonia) chain to synthesize carbamoyl phosphate.</text>
</comment>
<comment type="subcellular location">
    <subcellularLocation>
        <location evidence="1">Mitochondrion matrix</location>
    </subcellularLocation>
</comment>
<comment type="similarity">
    <text evidence="4">Belongs to the CarA family.</text>
</comment>
<organism>
    <name type="scientific">Aspergillus fumigatus (strain ATCC MYA-4609 / CBS 101355 / FGSC A1100 / Af293)</name>
    <name type="common">Neosartorya fumigata</name>
    <dbReference type="NCBI Taxonomy" id="330879"/>
    <lineage>
        <taxon>Eukaryota</taxon>
        <taxon>Fungi</taxon>
        <taxon>Dikarya</taxon>
        <taxon>Ascomycota</taxon>
        <taxon>Pezizomycotina</taxon>
        <taxon>Eurotiomycetes</taxon>
        <taxon>Eurotiomycetidae</taxon>
        <taxon>Eurotiales</taxon>
        <taxon>Aspergillaceae</taxon>
        <taxon>Aspergillus</taxon>
        <taxon>Aspergillus subgen. Fumigati</taxon>
    </lineage>
</organism>
<name>CARA_ASPFU</name>
<sequence>MFARVFKAMPARASALTSVNASIPARFMATVRQQRPAHERATFTIRDGPIFHGKSFGARTNISGEAVFTTSLVGYPESLTDPSYRGQILVFTQPLIGNYGVPSAERDEHGLLKYFESPNLQAAGVVVADVAEQYSHWTAVESLGEWCAREGVPAISGVDTRAIVTYLRERGSSLARITVGEEYDADQDEAFTDPEQIHLVRQVSTKAPFHVSAADPQCHVAVIDCGVKENILRSLVSRGAGITVFPFDYPIHKVAHHFDGVFISNGPGDPTHCQETTYHLRRLMETSQVPIFGICLGHQLLALAAGARTIKLKYGNRAHNIPALDLSTGRCHITSQNHGYAVDASTLPSDWKPYFVNLNDSSNEGMIHKSRPIFSTQFHPEAKGGPLDSSYLFDIYIDSVKKYKASQAAFYPQRDSLPSPLLVDLLAKERVGVQPTIGMQNIAAAATAAAAAA</sequence>
<accession>Q4WU09</accession>
<gene>
    <name type="primary">cpa1</name>
    <name type="ORF">AFUA_5G06780</name>
</gene>
<reference key="1">
    <citation type="journal article" date="2005" name="Nature">
        <title>Genomic sequence of the pathogenic and allergenic filamentous fungus Aspergillus fumigatus.</title>
        <authorList>
            <person name="Nierman W.C."/>
            <person name="Pain A."/>
            <person name="Anderson M.J."/>
            <person name="Wortman J.R."/>
            <person name="Kim H.S."/>
            <person name="Arroyo J."/>
            <person name="Berriman M."/>
            <person name="Abe K."/>
            <person name="Archer D.B."/>
            <person name="Bermejo C."/>
            <person name="Bennett J.W."/>
            <person name="Bowyer P."/>
            <person name="Chen D."/>
            <person name="Collins M."/>
            <person name="Coulsen R."/>
            <person name="Davies R."/>
            <person name="Dyer P.S."/>
            <person name="Farman M.L."/>
            <person name="Fedorova N."/>
            <person name="Fedorova N.D."/>
            <person name="Feldblyum T.V."/>
            <person name="Fischer R."/>
            <person name="Fosker N."/>
            <person name="Fraser A."/>
            <person name="Garcia J.L."/>
            <person name="Garcia M.J."/>
            <person name="Goble A."/>
            <person name="Goldman G.H."/>
            <person name="Gomi K."/>
            <person name="Griffith-Jones S."/>
            <person name="Gwilliam R."/>
            <person name="Haas B.J."/>
            <person name="Haas H."/>
            <person name="Harris D.E."/>
            <person name="Horiuchi H."/>
            <person name="Huang J."/>
            <person name="Humphray S."/>
            <person name="Jimenez J."/>
            <person name="Keller N."/>
            <person name="Khouri H."/>
            <person name="Kitamoto K."/>
            <person name="Kobayashi T."/>
            <person name="Konzack S."/>
            <person name="Kulkarni R."/>
            <person name="Kumagai T."/>
            <person name="Lafton A."/>
            <person name="Latge J.-P."/>
            <person name="Li W."/>
            <person name="Lord A."/>
            <person name="Lu C."/>
            <person name="Majoros W.H."/>
            <person name="May G.S."/>
            <person name="Miller B.L."/>
            <person name="Mohamoud Y."/>
            <person name="Molina M."/>
            <person name="Monod M."/>
            <person name="Mouyna I."/>
            <person name="Mulligan S."/>
            <person name="Murphy L.D."/>
            <person name="O'Neil S."/>
            <person name="Paulsen I."/>
            <person name="Penalva M.A."/>
            <person name="Pertea M."/>
            <person name="Price C."/>
            <person name="Pritchard B.L."/>
            <person name="Quail M.A."/>
            <person name="Rabbinowitsch E."/>
            <person name="Rawlins N."/>
            <person name="Rajandream M.A."/>
            <person name="Reichard U."/>
            <person name="Renauld H."/>
            <person name="Robson G.D."/>
            <person name="Rodriguez de Cordoba S."/>
            <person name="Rodriguez-Pena J.M."/>
            <person name="Ronning C.M."/>
            <person name="Rutter S."/>
            <person name="Salzberg S.L."/>
            <person name="Sanchez M."/>
            <person name="Sanchez-Ferrero J.C."/>
            <person name="Saunders D."/>
            <person name="Seeger K."/>
            <person name="Squares R."/>
            <person name="Squares S."/>
            <person name="Takeuchi M."/>
            <person name="Tekaia F."/>
            <person name="Turner G."/>
            <person name="Vazquez de Aldana C.R."/>
            <person name="Weidman J."/>
            <person name="White O."/>
            <person name="Woodward J.R."/>
            <person name="Yu J.-H."/>
            <person name="Fraser C.M."/>
            <person name="Galagan J.E."/>
            <person name="Asai K."/>
            <person name="Machida M."/>
            <person name="Hall N."/>
            <person name="Barrell B.G."/>
            <person name="Denning D.W."/>
        </authorList>
    </citation>
    <scope>NUCLEOTIDE SEQUENCE [LARGE SCALE GENOMIC DNA]</scope>
    <source>
        <strain>ATCC MYA-4609 / CBS 101355 / FGSC A1100 / Af293</strain>
    </source>
</reference>
<feature type="transit peptide" description="Mitochondrion" evidence="2">
    <location>
        <begin position="1"/>
        <end position="28"/>
    </location>
</feature>
<feature type="chain" id="PRO_0000290587" description="Carbamoyl phosphate synthase arginine-specific small chain" evidence="2">
    <location>
        <begin position="29"/>
        <end position="453"/>
    </location>
</feature>
<feature type="domain" description="Glutamine amidotransferase type-1" evidence="3">
    <location>
        <begin position="219"/>
        <end position="406"/>
    </location>
</feature>
<feature type="active site" description="Nucleophile" evidence="3">
    <location>
        <position position="295"/>
    </location>
</feature>
<feature type="active site" evidence="3">
    <location>
        <position position="379"/>
    </location>
</feature>
<feature type="active site" evidence="3">
    <location>
        <position position="381"/>
    </location>
</feature>